<dbReference type="EC" id="1.1.3.50" evidence="3"/>
<dbReference type="EMBL" id="BAEG01000075">
    <property type="protein sequence ID" value="GAB14773.1"/>
    <property type="molecule type" value="Genomic_DNA"/>
</dbReference>
<dbReference type="RefSeq" id="WP_003803563.1">
    <property type="nucleotide sequence ID" value="NZ_BAEG01000075.1"/>
</dbReference>
<dbReference type="SMR" id="H0QPM2"/>
<dbReference type="STRING" id="1077972.ARGLB_075_00560"/>
<dbReference type="eggNOG" id="COG2303">
    <property type="taxonomic scope" value="Bacteria"/>
</dbReference>
<dbReference type="OrthoDB" id="9798604at2"/>
<dbReference type="Proteomes" id="UP000003828">
    <property type="component" value="Unassembled WGS sequence"/>
</dbReference>
<dbReference type="GO" id="GO:0050660">
    <property type="term" value="F:flavin adenine dinucleotide binding"/>
    <property type="evidence" value="ECO:0007669"/>
    <property type="project" value="InterPro"/>
</dbReference>
<dbReference type="GO" id="GO:0016614">
    <property type="term" value="F:oxidoreductase activity, acting on CH-OH group of donors"/>
    <property type="evidence" value="ECO:0007669"/>
    <property type="project" value="InterPro"/>
</dbReference>
<dbReference type="Gene3D" id="3.50.50.60">
    <property type="entry name" value="FAD/NAD(P)-binding domain"/>
    <property type="match status" value="2"/>
</dbReference>
<dbReference type="InterPro" id="IPR036188">
    <property type="entry name" value="FAD/NAD-bd_sf"/>
</dbReference>
<dbReference type="InterPro" id="IPR000172">
    <property type="entry name" value="GMC_OxRdtase_N"/>
</dbReference>
<dbReference type="InterPro" id="IPR007867">
    <property type="entry name" value="GMC_OxRtase_C"/>
</dbReference>
<dbReference type="InterPro" id="IPR051473">
    <property type="entry name" value="P2Ox-like"/>
</dbReference>
<dbReference type="PANTHER" id="PTHR42784">
    <property type="entry name" value="PYRANOSE 2-OXIDASE"/>
    <property type="match status" value="1"/>
</dbReference>
<dbReference type="PANTHER" id="PTHR42784:SF1">
    <property type="entry name" value="PYRANOSE 2-OXIDASE"/>
    <property type="match status" value="1"/>
</dbReference>
<dbReference type="Pfam" id="PF05199">
    <property type="entry name" value="GMC_oxred_C"/>
    <property type="match status" value="1"/>
</dbReference>
<dbReference type="Pfam" id="PF00732">
    <property type="entry name" value="GMC_oxred_N"/>
    <property type="match status" value="1"/>
</dbReference>
<dbReference type="SUPFAM" id="SSF54373">
    <property type="entry name" value="FAD-linked reductases, C-terminal domain"/>
    <property type="match status" value="1"/>
</dbReference>
<dbReference type="SUPFAM" id="SSF51905">
    <property type="entry name" value="FAD/NAD(P)-binding domain"/>
    <property type="match status" value="1"/>
</dbReference>
<feature type="chain" id="PRO_0000460965" description="C-glycoside 3-oxidase">
    <location>
        <begin position="1"/>
        <end position="519"/>
    </location>
</feature>
<feature type="region of interest" description="Disordered" evidence="2">
    <location>
        <begin position="43"/>
        <end position="93"/>
    </location>
</feature>
<feature type="compositionally biased region" description="Basic and acidic residues" evidence="2">
    <location>
        <begin position="55"/>
        <end position="64"/>
    </location>
</feature>
<feature type="active site" description="Proton acceptor" evidence="1">
    <location>
        <position position="440"/>
    </location>
</feature>
<feature type="binding site" evidence="1">
    <location>
        <position position="41"/>
    </location>
    <ligand>
        <name>FAD</name>
        <dbReference type="ChEBI" id="CHEBI:57692"/>
    </ligand>
</feature>
<feature type="binding site" evidence="1">
    <location>
        <position position="118"/>
    </location>
    <ligand>
        <name>FAD</name>
        <dbReference type="ChEBI" id="CHEBI:57692"/>
    </ligand>
</feature>
<feature type="binding site" evidence="1">
    <location>
        <position position="120"/>
    </location>
    <ligand>
        <name>FAD</name>
        <dbReference type="ChEBI" id="CHEBI:57692"/>
    </ligand>
</feature>
<feature type="binding site" evidence="1">
    <location>
        <position position="124"/>
    </location>
    <ligand>
        <name>FAD</name>
        <dbReference type="ChEBI" id="CHEBI:57692"/>
    </ligand>
</feature>
<feature type="binding site" evidence="1">
    <location>
        <position position="129"/>
    </location>
    <ligand>
        <name>FAD</name>
        <dbReference type="ChEBI" id="CHEBI:57692"/>
    </ligand>
</feature>
<feature type="binding site" evidence="1">
    <location>
        <position position="131"/>
    </location>
    <ligand>
        <name>FAD</name>
        <dbReference type="ChEBI" id="CHEBI:57692"/>
    </ligand>
</feature>
<feature type="binding site" evidence="1">
    <location>
        <position position="234"/>
    </location>
    <ligand>
        <name>FAD</name>
        <dbReference type="ChEBI" id="CHEBI:57692"/>
    </ligand>
</feature>
<feature type="binding site" evidence="1">
    <location>
        <position position="474"/>
    </location>
    <ligand>
        <name>FAD</name>
        <dbReference type="ChEBI" id="CHEBI:57692"/>
    </ligand>
</feature>
<feature type="binding site" evidence="1">
    <location>
        <position position="486"/>
    </location>
    <ligand>
        <name>FAD</name>
        <dbReference type="ChEBI" id="CHEBI:57692"/>
    </ligand>
</feature>
<protein>
    <recommendedName>
        <fullName evidence="4">C-glycoside 3-oxidase</fullName>
        <ecNumber evidence="3">1.1.3.50</ecNumber>
    </recommendedName>
    <alternativeName>
        <fullName evidence="4">AgCarA</fullName>
    </alternativeName>
</protein>
<accession>H0QPM2</accession>
<reference key="1">
    <citation type="submission" date="2011-12" db="EMBL/GenBank/DDBJ databases">
        <title>Whole genome shotgun sequence of Arthrobacter globiformis NBRC 12137.</title>
        <authorList>
            <person name="Miyazawa S."/>
            <person name="Hosoyama A."/>
            <person name="Tsuchikane K."/>
            <person name="Katsumata H."/>
            <person name="Yamazaki S."/>
            <person name="Fujita N."/>
        </authorList>
    </citation>
    <scope>NUCLEOTIDE SEQUENCE [LARGE SCALE GENOMIC DNA]</scope>
    <source>
        <strain>ATCC 8010 / DSM 20124 / JCM 1332 / NBRC 12137 / NCIMB 8907 / NRRL B-2979 / 168</strain>
    </source>
</reference>
<reference key="2">
    <citation type="journal article" date="2021" name="Proc. Natl. Acad. Sci. U.S.A.">
        <title>FAD-dependent C-glycoside-metabolizing enzymes in microorganisms: Screening, characterization, and crystal structure analysis.</title>
        <authorList>
            <person name="Kumano T."/>
            <person name="Hori S."/>
            <person name="Watanabe S."/>
            <person name="Terashita Y."/>
            <person name="Yu H.Y."/>
            <person name="Hashimoto Y."/>
            <person name="Senda T."/>
            <person name="Senda M."/>
            <person name="Kobayashi M."/>
        </authorList>
    </citation>
    <scope>FUNCTION</scope>
    <scope>CATALYTIC ACTIVITY</scope>
    <scope>PROPOSED REACTION MECHANISM</scope>
    <scope>SUBUNIT</scope>
    <source>
        <strain>ATCC 8010 / DSM 20124 / JCM 1332 / NBRC 12137 / NCIMB 8907 / NRRL B-2979 / 168</strain>
    </source>
</reference>
<name>CGLYO_ARTG1</name>
<sequence>MSGSRYPAAVDVAIVGSGPTASAYARILSEEAPGASIAMFEVGPTVSNPPGAHVKNIEDPERRSHAQRASEGPGAGAETVNSPGAVKSGERRARPGTYLLQDGYVFPGEDGMPVAAMSSNVGGMAAHWTAACPRPGGTERIPFLPDLEQLLDDADRLLGVTTHAFDGAPFSDLVRERLAAVVDNGRKPAFRVQPMPLAVHRREDAGLVWSGSDVVMGEVTRENPQFDLFDESLVTRVLVEDGVAAGVEVQDRRSGATHRVSARYVVVGGDALRTPQLLWASGIRPDALGRYLNDQAQVVFASRLRGVTDLQGPPAAGGTLSEQSGVAWVPYTDEAPFHGQVMQLDASPVPLAEDDPVVPGSIVGLGLFCAKDLQREDRVAFDNTVHDSYGMPAMRIHYRLTQRDHEILDRAKREIVRLGKAVGEPLVERPFVLPPGASLHYQGTTRMGETDDGESVCSPDSQVWEVPGLFVAGNGVIPTATACNPTLTAVALAVRGARKIAEELTSALLMSESDNRMVK</sequence>
<gene>
    <name evidence="4" type="primary">carA</name>
    <name evidence="6" type="ORF">ARGLB_075_00560</name>
</gene>
<proteinExistence type="evidence at protein level"/>
<comment type="function">
    <text evidence="3">FAD-dependent C-glycoside-metabolizing enzyme that participates in the degradation of certain C-glycosides by catalyzing the oxidation of the hydroxyl group at the C3 position of the sugar moiety (PubMed:34583991). Shows oxidase activity toward various C-glycosides such as isovitexin, isoorientin and mangiferin but cannot use carminic acid, puerarin, orientin or aloesin (PubMed:34583991). Shows weak activity (100 to 1000-fold lower) with O-glycosides (PubMed:34583991). Probably plays a crucial role in the metabolism of C-glycosides in nature (PubMed:34583991).</text>
</comment>
<comment type="catalytic activity">
    <reaction evidence="3">
        <text>isovitexin + O2 = 3''-dehydroisovitexin + H2O2</text>
        <dbReference type="Rhea" id="RHEA:75263"/>
        <dbReference type="ChEBI" id="CHEBI:15379"/>
        <dbReference type="ChEBI" id="CHEBI:16240"/>
        <dbReference type="ChEBI" id="CHEBI:58447"/>
        <dbReference type="ChEBI" id="CHEBI:194219"/>
        <dbReference type="EC" id="1.1.3.50"/>
    </reaction>
</comment>
<comment type="catalytic activity">
    <reaction evidence="3">
        <text>isoorientin + O2 = 3''-dehydroisoorientin + H2O2</text>
        <dbReference type="Rhea" id="RHEA:75259"/>
        <dbReference type="ChEBI" id="CHEBI:15379"/>
        <dbReference type="ChEBI" id="CHEBI:16240"/>
        <dbReference type="ChEBI" id="CHEBI:58333"/>
        <dbReference type="ChEBI" id="CHEBI:194218"/>
        <dbReference type="EC" id="1.1.3.50"/>
    </reaction>
</comment>
<comment type="catalytic activity">
    <reaction evidence="3">
        <text>mangiferin + O2 = 3'-dehydromangiferin + H2O2</text>
        <dbReference type="Rhea" id="RHEA:75255"/>
        <dbReference type="ChEBI" id="CHEBI:15379"/>
        <dbReference type="ChEBI" id="CHEBI:16240"/>
        <dbReference type="ChEBI" id="CHEBI:194216"/>
        <dbReference type="ChEBI" id="CHEBI:194217"/>
        <dbReference type="EC" id="1.1.3.50"/>
    </reaction>
</comment>
<comment type="cofactor">
    <cofactor evidence="1">
        <name>FAD</name>
        <dbReference type="ChEBI" id="CHEBI:57692"/>
    </cofactor>
    <text evidence="1">Binds 1 FAD per subunit.</text>
</comment>
<comment type="subunit">
    <text evidence="3">Monomer.</text>
</comment>
<comment type="similarity">
    <text evidence="5">Belongs to the GMC oxidoreductase family.</text>
</comment>
<organism>
    <name type="scientific">Arthrobacter globiformis (strain ATCC 8010 / DSM 20124 / JCM 1332 / NBRC 12137 / NCIMB 8907 / NRRL B-2979 / 168)</name>
    <dbReference type="NCBI Taxonomy" id="1077972"/>
    <lineage>
        <taxon>Bacteria</taxon>
        <taxon>Bacillati</taxon>
        <taxon>Actinomycetota</taxon>
        <taxon>Actinomycetes</taxon>
        <taxon>Micrococcales</taxon>
        <taxon>Micrococcaceae</taxon>
        <taxon>Arthrobacter</taxon>
    </lineage>
</organism>
<evidence type="ECO:0000250" key="1">
    <source>
        <dbReference type="UniProtKB" id="A0A0M2HFA3"/>
    </source>
</evidence>
<evidence type="ECO:0000256" key="2">
    <source>
        <dbReference type="SAM" id="MobiDB-lite"/>
    </source>
</evidence>
<evidence type="ECO:0000269" key="3">
    <source>
    </source>
</evidence>
<evidence type="ECO:0000303" key="4">
    <source>
    </source>
</evidence>
<evidence type="ECO:0000305" key="5"/>
<evidence type="ECO:0000312" key="6">
    <source>
        <dbReference type="EMBL" id="GAB14773.1"/>
    </source>
</evidence>
<keyword id="KW-0274">FAD</keyword>
<keyword id="KW-0285">Flavoprotein</keyword>
<keyword id="KW-0560">Oxidoreductase</keyword>
<keyword id="KW-1185">Reference proteome</keyword>